<sequence length="1058" mass="119121">MGVPALFRWLSNKYPKIISPVIEELPYEVNGEEIPVDITKPNPNGEEMDNLYLDMNGIVHPCTHPEGKPPPANEQEMMVEIFKYTDRVVNMVRPRKLLMIAVDGVAPRAKMNQQRARRFRSAQEAKEADEKKEEFRKMLAKQNGNKVDEELQEEVVKKTWDSNVITPGTPFMDILAASLRYWIAYKLNTDPAWEKLKIIISDATVPGEGEHKIMEFIRSQRAAPEHDPNTRHVIYGLDADLIMLGLATHEPHFRVLREDVFFQESRARTCHLCGQQGHKAEECRGQAKEKNGEFDEKQKGSSLKPFIWLHVSILREYLAAELYVPHQPFPFDLERALDDWVFMCFFVGNDFLPHLPSLDIRENGIDTLIAIWRDNIPVMGGYLTEDGHVDLKRAQLILQGLAKQEDAIFRRRRQAEERKLANEKRRKQEAKAREEERARKRRRSSPTYEPMDSPVGHRAPRGGGDAAPPNQLELITPSRGELSRQTRELTHSMVVNRGAVYRANMANKSAAAVLKSKLMQGSQNGQNGEEKSEGATTNNDEPSQDQPDQTEQTSPSVLGKRKADLVEEEDTDAGTPGRDSPAVPVAAKEDELPPDTVRLWEEGYADRYYEQKFGVDPQDKEFRHKVARAYAEGLAWVLLYYFQGCPSWTWYYPYHYAPFAADFVDIGDMEITFDKGVPFKPFEQLMGVLPASSNHAIPKVFHDLMSSPDSEIIDFYPEDFAVDLNGKKFAWQGVILLPFIDEKRLLAAMEKKYPLLTEDEKLRNSVGREVLLISEAHPLYQDLVANFYSKKQGVQKYKLNMRISDGLAGKVERNEAYIPHSSLPSSLEEYGMPSLEDDRSLTVNYEIPKSNHVHKSMLLRGVKFNPPALDNADIQAVKHKAQNSGRSYGGAPLRGGQKGGRINYASDRPNPFAAHLDPGFIPPVPGNVGGGPIMPSGWVPPIPGSAGFSRGPPPPPHGGMSGSHHRPPYGQGPGQYQGNHGQGDHYGQGQQGYYNQSSYYNQSNQYNGRSSDHGGSGGYRGGGGYHRGGNYRGGGYRDQRQYNQDQYSSRNSGGYGRY</sequence>
<proteinExistence type="inferred from homology"/>
<gene>
    <name type="primary">rat1</name>
    <name type="ORF">AfA35g10.12</name>
    <name type="ORF">AFUA_1G13730</name>
</gene>
<reference key="1">
    <citation type="journal article" date="2004" name="Fungal Genet. Biol.">
        <title>Insight into the genome of Aspergillus fumigatus: analysis of a 922 kb region encompassing the nitrate assimilation gene cluster.</title>
        <authorList>
            <person name="Pain A."/>
            <person name="Woodward J.R."/>
            <person name="Quail M.A."/>
            <person name="Anderson M.J."/>
            <person name="Clark R."/>
            <person name="Collins M."/>
            <person name="Fosker N."/>
            <person name="Fraser A."/>
            <person name="Harris D.E."/>
            <person name="Larke N."/>
            <person name="Murphy L.D."/>
            <person name="Humphray S."/>
            <person name="O'Neil S."/>
            <person name="Pertea M."/>
            <person name="Price C."/>
            <person name="Rabbinowitsch E."/>
            <person name="Rajandream M.A."/>
            <person name="Salzberg S.L."/>
            <person name="Saunders D."/>
            <person name="Seeger K."/>
            <person name="Sharp S."/>
            <person name="Warren T."/>
            <person name="Denning D.W."/>
            <person name="Barrell B.G."/>
            <person name="Hall N."/>
        </authorList>
    </citation>
    <scope>NUCLEOTIDE SEQUENCE [LARGE SCALE GENOMIC DNA]</scope>
    <source>
        <strain>ATCC MYA-4609 / CBS 101355 / FGSC A1100 / Af293</strain>
    </source>
</reference>
<reference key="2">
    <citation type="journal article" date="2005" name="Nature">
        <title>Genomic sequence of the pathogenic and allergenic filamentous fungus Aspergillus fumigatus.</title>
        <authorList>
            <person name="Nierman W.C."/>
            <person name="Pain A."/>
            <person name="Anderson M.J."/>
            <person name="Wortman J.R."/>
            <person name="Kim H.S."/>
            <person name="Arroyo J."/>
            <person name="Berriman M."/>
            <person name="Abe K."/>
            <person name="Archer D.B."/>
            <person name="Bermejo C."/>
            <person name="Bennett J.W."/>
            <person name="Bowyer P."/>
            <person name="Chen D."/>
            <person name="Collins M."/>
            <person name="Coulsen R."/>
            <person name="Davies R."/>
            <person name="Dyer P.S."/>
            <person name="Farman M.L."/>
            <person name="Fedorova N."/>
            <person name="Fedorova N.D."/>
            <person name="Feldblyum T.V."/>
            <person name="Fischer R."/>
            <person name="Fosker N."/>
            <person name="Fraser A."/>
            <person name="Garcia J.L."/>
            <person name="Garcia M.J."/>
            <person name="Goble A."/>
            <person name="Goldman G.H."/>
            <person name="Gomi K."/>
            <person name="Griffith-Jones S."/>
            <person name="Gwilliam R."/>
            <person name="Haas B.J."/>
            <person name="Haas H."/>
            <person name="Harris D.E."/>
            <person name="Horiuchi H."/>
            <person name="Huang J."/>
            <person name="Humphray S."/>
            <person name="Jimenez J."/>
            <person name="Keller N."/>
            <person name="Khouri H."/>
            <person name="Kitamoto K."/>
            <person name="Kobayashi T."/>
            <person name="Konzack S."/>
            <person name="Kulkarni R."/>
            <person name="Kumagai T."/>
            <person name="Lafton A."/>
            <person name="Latge J.-P."/>
            <person name="Li W."/>
            <person name="Lord A."/>
            <person name="Lu C."/>
            <person name="Majoros W.H."/>
            <person name="May G.S."/>
            <person name="Miller B.L."/>
            <person name="Mohamoud Y."/>
            <person name="Molina M."/>
            <person name="Monod M."/>
            <person name="Mouyna I."/>
            <person name="Mulligan S."/>
            <person name="Murphy L.D."/>
            <person name="O'Neil S."/>
            <person name="Paulsen I."/>
            <person name="Penalva M.A."/>
            <person name="Pertea M."/>
            <person name="Price C."/>
            <person name="Pritchard B.L."/>
            <person name="Quail M.A."/>
            <person name="Rabbinowitsch E."/>
            <person name="Rawlins N."/>
            <person name="Rajandream M.A."/>
            <person name="Reichard U."/>
            <person name="Renauld H."/>
            <person name="Robson G.D."/>
            <person name="Rodriguez de Cordoba S."/>
            <person name="Rodriguez-Pena J.M."/>
            <person name="Ronning C.M."/>
            <person name="Rutter S."/>
            <person name="Salzberg S.L."/>
            <person name="Sanchez M."/>
            <person name="Sanchez-Ferrero J.C."/>
            <person name="Saunders D."/>
            <person name="Seeger K."/>
            <person name="Squares R."/>
            <person name="Squares S."/>
            <person name="Takeuchi M."/>
            <person name="Tekaia F."/>
            <person name="Turner G."/>
            <person name="Vazquez de Aldana C.R."/>
            <person name="Weidman J."/>
            <person name="White O."/>
            <person name="Woodward J.R."/>
            <person name="Yu J.-H."/>
            <person name="Fraser C.M."/>
            <person name="Galagan J.E."/>
            <person name="Asai K."/>
            <person name="Machida M."/>
            <person name="Hall N."/>
            <person name="Barrell B.G."/>
            <person name="Denning D.W."/>
        </authorList>
    </citation>
    <scope>NUCLEOTIDE SEQUENCE [LARGE SCALE GENOMIC DNA]</scope>
    <source>
        <strain>ATCC MYA-4609 / CBS 101355 / FGSC A1100 / Af293</strain>
    </source>
</reference>
<protein>
    <recommendedName>
        <fullName>5'-3' exoribonuclease 2</fullName>
        <ecNumber>3.1.13.-</ecNumber>
    </recommendedName>
</protein>
<name>XRN2_ASPFU</name>
<feature type="initiator methionine" description="Removed" evidence="1">
    <location>
        <position position="1"/>
    </location>
</feature>
<feature type="chain" id="PRO_0000249918" description="5'-3' exoribonuclease 2">
    <location>
        <begin position="2"/>
        <end position="1058"/>
    </location>
</feature>
<feature type="zinc finger region" description="CCHC-type" evidence="5">
    <location>
        <begin position="268"/>
        <end position="285"/>
    </location>
</feature>
<feature type="region of interest" description="Disordered" evidence="6">
    <location>
        <begin position="418"/>
        <end position="490"/>
    </location>
</feature>
<feature type="region of interest" description="Disordered" evidence="6">
    <location>
        <begin position="520"/>
        <end position="588"/>
    </location>
</feature>
<feature type="region of interest" description="Disordered" evidence="6">
    <location>
        <begin position="881"/>
        <end position="908"/>
    </location>
</feature>
<feature type="region of interest" description="Disordered" evidence="6">
    <location>
        <begin position="935"/>
        <end position="1058"/>
    </location>
</feature>
<feature type="coiled-coil region" evidence="4">
    <location>
        <begin position="407"/>
        <end position="443"/>
    </location>
</feature>
<feature type="compositionally biased region" description="Basic and acidic residues" evidence="6">
    <location>
        <begin position="429"/>
        <end position="438"/>
    </location>
</feature>
<feature type="compositionally biased region" description="Basic and acidic residues" evidence="6">
    <location>
        <begin position="481"/>
        <end position="490"/>
    </location>
</feature>
<feature type="compositionally biased region" description="Polar residues" evidence="6">
    <location>
        <begin position="534"/>
        <end position="556"/>
    </location>
</feature>
<feature type="compositionally biased region" description="Gly residues" evidence="6">
    <location>
        <begin position="971"/>
        <end position="990"/>
    </location>
</feature>
<feature type="compositionally biased region" description="Low complexity" evidence="6">
    <location>
        <begin position="991"/>
        <end position="1009"/>
    </location>
</feature>
<feature type="compositionally biased region" description="Gly residues" evidence="6">
    <location>
        <begin position="1014"/>
        <end position="1034"/>
    </location>
</feature>
<feature type="compositionally biased region" description="Low complexity" evidence="6">
    <location>
        <begin position="1041"/>
        <end position="1050"/>
    </location>
</feature>
<accession>Q8TFZ1</accession>
<accession>Q4WS77</accession>
<keyword id="KW-0175">Coiled coil</keyword>
<keyword id="KW-0269">Exonuclease</keyword>
<keyword id="KW-0378">Hydrolase</keyword>
<keyword id="KW-0479">Metal-binding</keyword>
<keyword id="KW-0507">mRNA processing</keyword>
<keyword id="KW-0540">Nuclease</keyword>
<keyword id="KW-0539">Nucleus</keyword>
<keyword id="KW-1185">Reference proteome</keyword>
<keyword id="KW-0698">rRNA processing</keyword>
<keyword id="KW-0804">Transcription</keyword>
<keyword id="KW-0805">Transcription regulation</keyword>
<keyword id="KW-0806">Transcription termination</keyword>
<keyword id="KW-0862">Zinc</keyword>
<keyword id="KW-0863">Zinc-finger</keyword>
<dbReference type="EC" id="3.1.13.-"/>
<dbReference type="EMBL" id="BX649607">
    <property type="protein sequence ID" value="CAD29606.2"/>
    <property type="molecule type" value="Genomic_DNA"/>
</dbReference>
<dbReference type="EMBL" id="AAHF01000004">
    <property type="protein sequence ID" value="EAL90705.1"/>
    <property type="molecule type" value="Genomic_DNA"/>
</dbReference>
<dbReference type="RefSeq" id="XP_752743.1">
    <property type="nucleotide sequence ID" value="XM_747650.1"/>
</dbReference>
<dbReference type="SMR" id="Q8TFZ1"/>
<dbReference type="FunCoup" id="Q8TFZ1">
    <property type="interactions" value="1072"/>
</dbReference>
<dbReference type="STRING" id="330879.Q8TFZ1"/>
<dbReference type="EnsemblFungi" id="EAL90705">
    <property type="protein sequence ID" value="EAL90705"/>
    <property type="gene ID" value="AFUA_1G13730"/>
</dbReference>
<dbReference type="GeneID" id="3510193"/>
<dbReference type="KEGG" id="afm:AFUA_1G13730"/>
<dbReference type="VEuPathDB" id="FungiDB:Afu1g13730"/>
<dbReference type="eggNOG" id="KOG2044">
    <property type="taxonomic scope" value="Eukaryota"/>
</dbReference>
<dbReference type="HOGENOM" id="CLU_006038_1_1_1"/>
<dbReference type="InParanoid" id="Q8TFZ1"/>
<dbReference type="OMA" id="ITHDMVV"/>
<dbReference type="OrthoDB" id="28245at2759"/>
<dbReference type="Proteomes" id="UP000002530">
    <property type="component" value="Chromosome 1"/>
</dbReference>
<dbReference type="GO" id="GO:0005634">
    <property type="term" value="C:nucleus"/>
    <property type="evidence" value="ECO:0000318"/>
    <property type="project" value="GO_Central"/>
</dbReference>
<dbReference type="GO" id="GO:0004534">
    <property type="term" value="F:5'-3' RNA exonuclease activity"/>
    <property type="evidence" value="ECO:0000318"/>
    <property type="project" value="GO_Central"/>
</dbReference>
<dbReference type="GO" id="GO:0003723">
    <property type="term" value="F:RNA binding"/>
    <property type="evidence" value="ECO:0000318"/>
    <property type="project" value="GO_Central"/>
</dbReference>
<dbReference type="GO" id="GO:0008270">
    <property type="term" value="F:zinc ion binding"/>
    <property type="evidence" value="ECO:0007669"/>
    <property type="project" value="UniProtKB-KW"/>
</dbReference>
<dbReference type="GO" id="GO:0006353">
    <property type="term" value="P:DNA-templated transcription termination"/>
    <property type="evidence" value="ECO:0007669"/>
    <property type="project" value="UniProtKB-KW"/>
</dbReference>
<dbReference type="GO" id="GO:0006397">
    <property type="term" value="P:mRNA processing"/>
    <property type="evidence" value="ECO:0007669"/>
    <property type="project" value="UniProtKB-KW"/>
</dbReference>
<dbReference type="GO" id="GO:0000956">
    <property type="term" value="P:nuclear-transcribed mRNA catabolic process"/>
    <property type="evidence" value="ECO:0000318"/>
    <property type="project" value="GO_Central"/>
</dbReference>
<dbReference type="GO" id="GO:0051984">
    <property type="term" value="P:positive regulation of chromosome segregation"/>
    <property type="evidence" value="ECO:0007669"/>
    <property type="project" value="EnsemblFungi"/>
</dbReference>
<dbReference type="GO" id="GO:0180037">
    <property type="term" value="P:rapid tRNA decay"/>
    <property type="evidence" value="ECO:0007669"/>
    <property type="project" value="EnsemblFungi"/>
</dbReference>
<dbReference type="GO" id="GO:0006364">
    <property type="term" value="P:rRNA processing"/>
    <property type="evidence" value="ECO:0007669"/>
    <property type="project" value="UniProtKB-KW"/>
</dbReference>
<dbReference type="CDD" id="cd18673">
    <property type="entry name" value="PIN_XRN1-2-like"/>
    <property type="match status" value="1"/>
</dbReference>
<dbReference type="FunFam" id="1.25.40.1050:FF:000002">
    <property type="entry name" value="5'-3' exoribonuclease"/>
    <property type="match status" value="1"/>
</dbReference>
<dbReference type="FunFam" id="3.40.50.12390:FF:000003">
    <property type="entry name" value="5'-3' exoribonuclease"/>
    <property type="match status" value="1"/>
</dbReference>
<dbReference type="FunFam" id="3.40.50.12390:FF:000005">
    <property type="entry name" value="5'-3' exoribonuclease 2"/>
    <property type="match status" value="1"/>
</dbReference>
<dbReference type="Gene3D" id="1.25.40.1050">
    <property type="match status" value="1"/>
</dbReference>
<dbReference type="Gene3D" id="3.40.50.12390">
    <property type="match status" value="2"/>
</dbReference>
<dbReference type="InterPro" id="IPR027073">
    <property type="entry name" value="5_3_exoribonuclease"/>
</dbReference>
<dbReference type="InterPro" id="IPR041412">
    <property type="entry name" value="Xrn1_helical"/>
</dbReference>
<dbReference type="InterPro" id="IPR004859">
    <property type="entry name" value="Xrn1_N"/>
</dbReference>
<dbReference type="InterPro" id="IPR017151">
    <property type="entry name" value="Xrn2/3/4"/>
</dbReference>
<dbReference type="InterPro" id="IPR001878">
    <property type="entry name" value="Znf_CCHC"/>
</dbReference>
<dbReference type="PANTHER" id="PTHR12341:SF41">
    <property type="entry name" value="5'-3' EXORIBONUCLEASE 2"/>
    <property type="match status" value="1"/>
</dbReference>
<dbReference type="PANTHER" id="PTHR12341">
    <property type="entry name" value="5'-&gt;3' EXORIBONUCLEASE"/>
    <property type="match status" value="1"/>
</dbReference>
<dbReference type="Pfam" id="PF17846">
    <property type="entry name" value="XRN_M"/>
    <property type="match status" value="1"/>
</dbReference>
<dbReference type="Pfam" id="PF03159">
    <property type="entry name" value="XRN_N"/>
    <property type="match status" value="1"/>
</dbReference>
<dbReference type="PIRSF" id="PIRSF037239">
    <property type="entry name" value="Exonuclease_Xrn2"/>
    <property type="match status" value="1"/>
</dbReference>
<dbReference type="PROSITE" id="PS50158">
    <property type="entry name" value="ZF_CCHC"/>
    <property type="match status" value="1"/>
</dbReference>
<comment type="function">
    <text evidence="2 3">Possesses 5'-&gt;3' exoribonuclease activity (By similarity). Required for the processing of nuclear mRNA and rRNA precursors. May promote the termination of transcription by RNA polymerase II (By similarity). Essential for vegetative cell growth and chromosome segregation (By similarity).</text>
</comment>
<comment type="subunit">
    <text evidence="2">Interacts with rai1; the interaction is direct, stabilizes rat1 protein structure and may stimulate its exoribonuclease activity (By similarity). The interaction also stimulates rai1 pyrophosphohydrolase activity, probably by recruiting it to mRNA substrates (By similarity).</text>
</comment>
<comment type="subcellular location">
    <subcellularLocation>
        <location evidence="1">Nucleus</location>
    </subcellularLocation>
</comment>
<comment type="similarity">
    <text evidence="7">Belongs to the 5'-3' exonuclease family. XRN2/RAT1 subfamily.</text>
</comment>
<organism>
    <name type="scientific">Aspergillus fumigatus (strain ATCC MYA-4609 / CBS 101355 / FGSC A1100 / Af293)</name>
    <name type="common">Neosartorya fumigata</name>
    <dbReference type="NCBI Taxonomy" id="330879"/>
    <lineage>
        <taxon>Eukaryota</taxon>
        <taxon>Fungi</taxon>
        <taxon>Dikarya</taxon>
        <taxon>Ascomycota</taxon>
        <taxon>Pezizomycotina</taxon>
        <taxon>Eurotiomycetes</taxon>
        <taxon>Eurotiomycetidae</taxon>
        <taxon>Eurotiales</taxon>
        <taxon>Aspergillaceae</taxon>
        <taxon>Aspergillus</taxon>
        <taxon>Aspergillus subgen. Fumigati</taxon>
    </lineage>
</organism>
<evidence type="ECO:0000250" key="1"/>
<evidence type="ECO:0000250" key="2">
    <source>
        <dbReference type="UniProtKB" id="P40848"/>
    </source>
</evidence>
<evidence type="ECO:0000250" key="3">
    <source>
        <dbReference type="UniProtKB" id="Q02792"/>
    </source>
</evidence>
<evidence type="ECO:0000255" key="4"/>
<evidence type="ECO:0000255" key="5">
    <source>
        <dbReference type="PROSITE-ProRule" id="PRU00047"/>
    </source>
</evidence>
<evidence type="ECO:0000256" key="6">
    <source>
        <dbReference type="SAM" id="MobiDB-lite"/>
    </source>
</evidence>
<evidence type="ECO:0000305" key="7"/>